<name>RPOC_STRZP</name>
<evidence type="ECO:0000255" key="1">
    <source>
        <dbReference type="HAMAP-Rule" id="MF_01322"/>
    </source>
</evidence>
<keyword id="KW-0240">DNA-directed RNA polymerase</keyword>
<keyword id="KW-0460">Magnesium</keyword>
<keyword id="KW-0479">Metal-binding</keyword>
<keyword id="KW-0548">Nucleotidyltransferase</keyword>
<keyword id="KW-0804">Transcription</keyword>
<keyword id="KW-0808">Transferase</keyword>
<keyword id="KW-0862">Zinc</keyword>
<protein>
    <recommendedName>
        <fullName evidence="1">DNA-directed RNA polymerase subunit beta'</fullName>
        <shortName evidence="1">RNAP subunit beta'</shortName>
        <ecNumber evidence="1">2.7.7.6</ecNumber>
    </recommendedName>
    <alternativeName>
        <fullName evidence="1">RNA polymerase subunit beta'</fullName>
    </alternativeName>
    <alternativeName>
        <fullName evidence="1">Transcriptase subunit beta'</fullName>
    </alternativeName>
</protein>
<comment type="function">
    <text evidence="1">DNA-dependent RNA polymerase catalyzes the transcription of DNA into RNA using the four ribonucleoside triphosphates as substrates.</text>
</comment>
<comment type="catalytic activity">
    <reaction evidence="1">
        <text>RNA(n) + a ribonucleoside 5'-triphosphate = RNA(n+1) + diphosphate</text>
        <dbReference type="Rhea" id="RHEA:21248"/>
        <dbReference type="Rhea" id="RHEA-COMP:14527"/>
        <dbReference type="Rhea" id="RHEA-COMP:17342"/>
        <dbReference type="ChEBI" id="CHEBI:33019"/>
        <dbReference type="ChEBI" id="CHEBI:61557"/>
        <dbReference type="ChEBI" id="CHEBI:140395"/>
        <dbReference type="EC" id="2.7.7.6"/>
    </reaction>
</comment>
<comment type="cofactor">
    <cofactor evidence="1">
        <name>Mg(2+)</name>
        <dbReference type="ChEBI" id="CHEBI:18420"/>
    </cofactor>
    <text evidence="1">Binds 1 Mg(2+) ion per subunit.</text>
</comment>
<comment type="cofactor">
    <cofactor evidence="1">
        <name>Zn(2+)</name>
        <dbReference type="ChEBI" id="CHEBI:29105"/>
    </cofactor>
    <text evidence="1">Binds 2 Zn(2+) ions per subunit.</text>
</comment>
<comment type="subunit">
    <text evidence="1">The RNAP catalytic core consists of 2 alpha, 1 beta, 1 beta' and 1 omega subunit. When a sigma factor is associated with the core the holoenzyme is formed, which can initiate transcription.</text>
</comment>
<comment type="similarity">
    <text evidence="1">Belongs to the RNA polymerase beta' chain family.</text>
</comment>
<reference key="1">
    <citation type="journal article" date="2010" name="Genome Biol.">
        <title>Structure and dynamics of the pan-genome of Streptococcus pneumoniae and closely related species.</title>
        <authorList>
            <person name="Donati C."/>
            <person name="Hiller N.L."/>
            <person name="Tettelin H."/>
            <person name="Muzzi A."/>
            <person name="Croucher N.J."/>
            <person name="Angiuoli S.V."/>
            <person name="Oggioni M."/>
            <person name="Dunning Hotopp J.C."/>
            <person name="Hu F.Z."/>
            <person name="Riley D.R."/>
            <person name="Covacci A."/>
            <person name="Mitchell T.J."/>
            <person name="Bentley S.D."/>
            <person name="Kilian M."/>
            <person name="Ehrlich G.D."/>
            <person name="Rappuoli R."/>
            <person name="Moxon E.R."/>
            <person name="Masignani V."/>
        </authorList>
    </citation>
    <scope>NUCLEOTIDE SEQUENCE [LARGE SCALE GENOMIC DNA]</scope>
    <source>
        <strain>P1031</strain>
    </source>
</reference>
<accession>C1CMQ7</accession>
<gene>
    <name evidence="1" type="primary">rpoC</name>
    <name type="ordered locus">SPP_1980</name>
</gene>
<dbReference type="EC" id="2.7.7.6" evidence="1"/>
<dbReference type="EMBL" id="CP000920">
    <property type="protein sequence ID" value="ACO20944.1"/>
    <property type="molecule type" value="Genomic_DNA"/>
</dbReference>
<dbReference type="RefSeq" id="WP_000228775.1">
    <property type="nucleotide sequence ID" value="NC_012467.1"/>
</dbReference>
<dbReference type="SMR" id="C1CMQ7"/>
<dbReference type="KEGG" id="spp:SPP_1980"/>
<dbReference type="HOGENOM" id="CLU_000524_3_1_9"/>
<dbReference type="GO" id="GO:0000428">
    <property type="term" value="C:DNA-directed RNA polymerase complex"/>
    <property type="evidence" value="ECO:0007669"/>
    <property type="project" value="UniProtKB-KW"/>
</dbReference>
<dbReference type="GO" id="GO:0003677">
    <property type="term" value="F:DNA binding"/>
    <property type="evidence" value="ECO:0007669"/>
    <property type="project" value="UniProtKB-UniRule"/>
</dbReference>
<dbReference type="GO" id="GO:0003899">
    <property type="term" value="F:DNA-directed RNA polymerase activity"/>
    <property type="evidence" value="ECO:0007669"/>
    <property type="project" value="UniProtKB-UniRule"/>
</dbReference>
<dbReference type="GO" id="GO:0000287">
    <property type="term" value="F:magnesium ion binding"/>
    <property type="evidence" value="ECO:0007669"/>
    <property type="project" value="UniProtKB-UniRule"/>
</dbReference>
<dbReference type="GO" id="GO:0008270">
    <property type="term" value="F:zinc ion binding"/>
    <property type="evidence" value="ECO:0007669"/>
    <property type="project" value="UniProtKB-UniRule"/>
</dbReference>
<dbReference type="GO" id="GO:0006351">
    <property type="term" value="P:DNA-templated transcription"/>
    <property type="evidence" value="ECO:0007669"/>
    <property type="project" value="UniProtKB-UniRule"/>
</dbReference>
<dbReference type="CDD" id="cd02655">
    <property type="entry name" value="RNAP_beta'_C"/>
    <property type="match status" value="1"/>
</dbReference>
<dbReference type="CDD" id="cd01609">
    <property type="entry name" value="RNAP_beta'_N"/>
    <property type="match status" value="1"/>
</dbReference>
<dbReference type="FunFam" id="1.10.150.390:FF:000002">
    <property type="entry name" value="DNA-directed RNA polymerase subunit beta"/>
    <property type="match status" value="1"/>
</dbReference>
<dbReference type="FunFam" id="4.10.860.120:FF:000001">
    <property type="entry name" value="DNA-directed RNA polymerase subunit beta"/>
    <property type="match status" value="1"/>
</dbReference>
<dbReference type="Gene3D" id="1.10.132.30">
    <property type="match status" value="1"/>
</dbReference>
<dbReference type="Gene3D" id="1.10.150.390">
    <property type="match status" value="1"/>
</dbReference>
<dbReference type="Gene3D" id="1.10.1790.20">
    <property type="match status" value="1"/>
</dbReference>
<dbReference type="Gene3D" id="1.10.40.90">
    <property type="match status" value="1"/>
</dbReference>
<dbReference type="Gene3D" id="2.40.40.20">
    <property type="match status" value="1"/>
</dbReference>
<dbReference type="Gene3D" id="2.40.50.100">
    <property type="match status" value="1"/>
</dbReference>
<dbReference type="Gene3D" id="4.10.860.120">
    <property type="entry name" value="RNA polymerase II, clamp domain"/>
    <property type="match status" value="1"/>
</dbReference>
<dbReference type="Gene3D" id="1.10.274.100">
    <property type="entry name" value="RNA polymerase Rpb1, domain 3"/>
    <property type="match status" value="1"/>
</dbReference>
<dbReference type="HAMAP" id="MF_01322">
    <property type="entry name" value="RNApol_bact_RpoC"/>
    <property type="match status" value="1"/>
</dbReference>
<dbReference type="InterPro" id="IPR045867">
    <property type="entry name" value="DNA-dir_RpoC_beta_prime"/>
</dbReference>
<dbReference type="InterPro" id="IPR012754">
    <property type="entry name" value="DNA-dir_RpoC_beta_prime_bact"/>
</dbReference>
<dbReference type="InterPro" id="IPR000722">
    <property type="entry name" value="RNA_pol_asu"/>
</dbReference>
<dbReference type="InterPro" id="IPR006592">
    <property type="entry name" value="RNA_pol_N"/>
</dbReference>
<dbReference type="InterPro" id="IPR007080">
    <property type="entry name" value="RNA_pol_Rpb1_1"/>
</dbReference>
<dbReference type="InterPro" id="IPR007066">
    <property type="entry name" value="RNA_pol_Rpb1_3"/>
</dbReference>
<dbReference type="InterPro" id="IPR042102">
    <property type="entry name" value="RNA_pol_Rpb1_3_sf"/>
</dbReference>
<dbReference type="InterPro" id="IPR007083">
    <property type="entry name" value="RNA_pol_Rpb1_4"/>
</dbReference>
<dbReference type="InterPro" id="IPR007081">
    <property type="entry name" value="RNA_pol_Rpb1_5"/>
</dbReference>
<dbReference type="InterPro" id="IPR044893">
    <property type="entry name" value="RNA_pol_Rpb1_clamp_domain"/>
</dbReference>
<dbReference type="InterPro" id="IPR038120">
    <property type="entry name" value="Rpb1_funnel_sf"/>
</dbReference>
<dbReference type="NCBIfam" id="TIGR02386">
    <property type="entry name" value="rpoC_TIGR"/>
    <property type="match status" value="1"/>
</dbReference>
<dbReference type="PANTHER" id="PTHR19376">
    <property type="entry name" value="DNA-DIRECTED RNA POLYMERASE"/>
    <property type="match status" value="1"/>
</dbReference>
<dbReference type="PANTHER" id="PTHR19376:SF54">
    <property type="entry name" value="DNA-DIRECTED RNA POLYMERASE SUBUNIT BETA"/>
    <property type="match status" value="1"/>
</dbReference>
<dbReference type="Pfam" id="PF04997">
    <property type="entry name" value="RNA_pol_Rpb1_1"/>
    <property type="match status" value="1"/>
</dbReference>
<dbReference type="Pfam" id="PF00623">
    <property type="entry name" value="RNA_pol_Rpb1_2"/>
    <property type="match status" value="2"/>
</dbReference>
<dbReference type="Pfam" id="PF04983">
    <property type="entry name" value="RNA_pol_Rpb1_3"/>
    <property type="match status" value="1"/>
</dbReference>
<dbReference type="Pfam" id="PF05000">
    <property type="entry name" value="RNA_pol_Rpb1_4"/>
    <property type="match status" value="1"/>
</dbReference>
<dbReference type="Pfam" id="PF04998">
    <property type="entry name" value="RNA_pol_Rpb1_5"/>
    <property type="match status" value="1"/>
</dbReference>
<dbReference type="SMART" id="SM00663">
    <property type="entry name" value="RPOLA_N"/>
    <property type="match status" value="1"/>
</dbReference>
<dbReference type="SUPFAM" id="SSF64484">
    <property type="entry name" value="beta and beta-prime subunits of DNA dependent RNA-polymerase"/>
    <property type="match status" value="1"/>
</dbReference>
<sequence length="1225" mass="137045">MVDVNRFKSMQITLASPSKVRSWSYGEVKKPETINYRTLKPEREGLFDEVIFGPTKDWECACGKYKRIRYRGIVCDRCGVEVTRTKVRRERMGHIELKAPVSHIWYFKGIPSRMGLTLDMSPRALEEVIYFAAYVVIDPKDTPLEHKSIMTEREYRERLREYGYGSFVAKMGAEAIQDLLKQVDLEKEIAELKEELKTATGQKRVKAIRRLDVLDAFYKSGNKPEWMILNILPVIPPDLRPMLQLDGGRFASSDLNDLYRRVINRNNRLARLLELNAPGIIVQNEKRMLQEAVDALIDNGRRGRPITGPGSRPLKSLSHMLKGKQGRFRQNLLGKRVDFSGRSVIAVGPTLKMYQCGVPREMAIELFKPFVMREIVARDIVQNVKAAKRLVERGDERIWDILEEVIKEHPVLLNRAPTLHRLGIQAFEPVLIDGKALRLHPLVCEAYNADFDGDQMAIHVPLSEEAQAEARILMLAAEHILNPKDGKPVVTPSQDMVLGNYYLTMEEAGREGEGMVFKDRDEAVMAYRNGYVHLHSRVGIATDSLNKPWTEEQRHKVLLTTVGKILFNDIMPEGLPYLQEPNNANLTEGVPAKYFLPLGGDIKEAISNLELNPPFKKKNLGNIIAEIFKRFRTTETSALLDRMKNLGYHHSTLAGLTVGIADIPVVDDKTEIIEESHKRVEQITKQFRRGMITDDERYNAVTAEWRAAREKLEKRLIANQDPKNPIVMMMDSGARGNISNFSQLAGMRGLMAAPNGRIMELPILSNFREGLSVLEMFFSTHGARKGMTDTALKTADSGYLTRRLVDVAQDVIIREDDCGTDRGLLIRSIAEGKEMIESLEERLNGRYTKKTVKHPETGAVIIGPNELITEDKAREIVNAGVEEVTIRSVFTCNTRHGVCRHCYGINLATGDAVEVGEAVGTIAAQSIGEPGTQLTMRTFHTGGVASNTDITQGLPRVQEIFEARNPKGEAVITEVKGQVTAIEEDASTRTKKVFVKGETGEGEYVVPFTARMRVEVGGQVARGAALTEGSIQPKRLLAVRDVLSVETYLLGEVQKVYRSQGVEIGDKHIEVMVRQMIRKVRVMDPGDTDLLMGTLMDINDFTDANKDVLIAGGVPATGRPVLMGITKASLETNSFLSAASFQETTRVLTDAAIRGKKDHLLGLKENVIIGKIIPAGTGMARYRNLEPYAVNEEEYLNPPVEEEGNEETTEVVVDTAVETVEETVE</sequence>
<proteinExistence type="inferred from homology"/>
<feature type="chain" id="PRO_1000165854" description="DNA-directed RNA polymerase subunit beta'">
    <location>
        <begin position="1"/>
        <end position="1225"/>
    </location>
</feature>
<feature type="binding site" evidence="1">
    <location>
        <position position="60"/>
    </location>
    <ligand>
        <name>Zn(2+)</name>
        <dbReference type="ChEBI" id="CHEBI:29105"/>
        <label>1</label>
    </ligand>
</feature>
<feature type="binding site" evidence="1">
    <location>
        <position position="62"/>
    </location>
    <ligand>
        <name>Zn(2+)</name>
        <dbReference type="ChEBI" id="CHEBI:29105"/>
        <label>1</label>
    </ligand>
</feature>
<feature type="binding site" evidence="1">
    <location>
        <position position="75"/>
    </location>
    <ligand>
        <name>Zn(2+)</name>
        <dbReference type="ChEBI" id="CHEBI:29105"/>
        <label>1</label>
    </ligand>
</feature>
<feature type="binding site" evidence="1">
    <location>
        <position position="78"/>
    </location>
    <ligand>
        <name>Zn(2+)</name>
        <dbReference type="ChEBI" id="CHEBI:29105"/>
        <label>1</label>
    </ligand>
</feature>
<feature type="binding site" evidence="1">
    <location>
        <position position="450"/>
    </location>
    <ligand>
        <name>Mg(2+)</name>
        <dbReference type="ChEBI" id="CHEBI:18420"/>
    </ligand>
</feature>
<feature type="binding site" evidence="1">
    <location>
        <position position="452"/>
    </location>
    <ligand>
        <name>Mg(2+)</name>
        <dbReference type="ChEBI" id="CHEBI:18420"/>
    </ligand>
</feature>
<feature type="binding site" evidence="1">
    <location>
        <position position="454"/>
    </location>
    <ligand>
        <name>Mg(2+)</name>
        <dbReference type="ChEBI" id="CHEBI:18420"/>
    </ligand>
</feature>
<feature type="binding site" evidence="1">
    <location>
        <position position="818"/>
    </location>
    <ligand>
        <name>Zn(2+)</name>
        <dbReference type="ChEBI" id="CHEBI:29105"/>
        <label>2</label>
    </ligand>
</feature>
<feature type="binding site" evidence="1">
    <location>
        <position position="892"/>
    </location>
    <ligand>
        <name>Zn(2+)</name>
        <dbReference type="ChEBI" id="CHEBI:29105"/>
        <label>2</label>
    </ligand>
</feature>
<feature type="binding site" evidence="1">
    <location>
        <position position="899"/>
    </location>
    <ligand>
        <name>Zn(2+)</name>
        <dbReference type="ChEBI" id="CHEBI:29105"/>
        <label>2</label>
    </ligand>
</feature>
<feature type="binding site" evidence="1">
    <location>
        <position position="902"/>
    </location>
    <ligand>
        <name>Zn(2+)</name>
        <dbReference type="ChEBI" id="CHEBI:29105"/>
        <label>2</label>
    </ligand>
</feature>
<organism>
    <name type="scientific">Streptococcus pneumoniae (strain P1031)</name>
    <dbReference type="NCBI Taxonomy" id="488223"/>
    <lineage>
        <taxon>Bacteria</taxon>
        <taxon>Bacillati</taxon>
        <taxon>Bacillota</taxon>
        <taxon>Bacilli</taxon>
        <taxon>Lactobacillales</taxon>
        <taxon>Streptococcaceae</taxon>
        <taxon>Streptococcus</taxon>
    </lineage>
</organism>